<keyword id="KW-0687">Ribonucleoprotein</keyword>
<keyword id="KW-0689">Ribosomal protein</keyword>
<accession>A7FY85</accession>
<comment type="similarity">
    <text evidence="1">Belongs to the bacterial ribosomal protein bL35 family.</text>
</comment>
<feature type="chain" id="PRO_1000050680" description="Large ribosomal subunit protein bL35">
    <location>
        <begin position="1"/>
        <end position="65"/>
    </location>
</feature>
<evidence type="ECO:0000255" key="1">
    <source>
        <dbReference type="HAMAP-Rule" id="MF_00514"/>
    </source>
</evidence>
<evidence type="ECO:0000305" key="2"/>
<organism>
    <name type="scientific">Clostridium botulinum (strain ATCC 19397 / Type A)</name>
    <dbReference type="NCBI Taxonomy" id="441770"/>
    <lineage>
        <taxon>Bacteria</taxon>
        <taxon>Bacillati</taxon>
        <taxon>Bacillota</taxon>
        <taxon>Clostridia</taxon>
        <taxon>Eubacteriales</taxon>
        <taxon>Clostridiaceae</taxon>
        <taxon>Clostridium</taxon>
    </lineage>
</organism>
<gene>
    <name evidence="1" type="primary">rpmI</name>
    <name type="ordered locus">CLB_3166</name>
</gene>
<proteinExistence type="inferred from homology"/>
<sequence>MPKMKTKRAAAKRFKVTGTGKLKRAKAFKSHILTKKSRKTKRNLRKAGYVSESQEKVMKKVLPYL</sequence>
<protein>
    <recommendedName>
        <fullName evidence="1">Large ribosomal subunit protein bL35</fullName>
    </recommendedName>
    <alternativeName>
        <fullName evidence="2">50S ribosomal protein L35</fullName>
    </alternativeName>
</protein>
<reference key="1">
    <citation type="journal article" date="2007" name="PLoS ONE">
        <title>Analysis of the neurotoxin complex genes in Clostridium botulinum A1-A4 and B1 strains: BoNT/A3, /Ba4 and /B1 clusters are located within plasmids.</title>
        <authorList>
            <person name="Smith T.J."/>
            <person name="Hill K.K."/>
            <person name="Foley B.T."/>
            <person name="Detter J.C."/>
            <person name="Munk A.C."/>
            <person name="Bruce D.C."/>
            <person name="Doggett N.A."/>
            <person name="Smith L.A."/>
            <person name="Marks J.D."/>
            <person name="Xie G."/>
            <person name="Brettin T.S."/>
        </authorList>
    </citation>
    <scope>NUCLEOTIDE SEQUENCE [LARGE SCALE GENOMIC DNA]</scope>
    <source>
        <strain>ATCC 19397 / Type A</strain>
    </source>
</reference>
<dbReference type="EMBL" id="CP000726">
    <property type="protein sequence ID" value="ABS34064.1"/>
    <property type="molecule type" value="Genomic_DNA"/>
</dbReference>
<dbReference type="RefSeq" id="WP_003357520.1">
    <property type="nucleotide sequence ID" value="NC_009697.1"/>
</dbReference>
<dbReference type="SMR" id="A7FY85"/>
<dbReference type="GeneID" id="92939857"/>
<dbReference type="KEGG" id="cba:CLB_3166"/>
<dbReference type="HOGENOM" id="CLU_169643_1_1_9"/>
<dbReference type="GO" id="GO:0022625">
    <property type="term" value="C:cytosolic large ribosomal subunit"/>
    <property type="evidence" value="ECO:0007669"/>
    <property type="project" value="TreeGrafter"/>
</dbReference>
<dbReference type="GO" id="GO:0003735">
    <property type="term" value="F:structural constituent of ribosome"/>
    <property type="evidence" value="ECO:0007669"/>
    <property type="project" value="InterPro"/>
</dbReference>
<dbReference type="GO" id="GO:0006412">
    <property type="term" value="P:translation"/>
    <property type="evidence" value="ECO:0007669"/>
    <property type="project" value="UniProtKB-UniRule"/>
</dbReference>
<dbReference type="FunFam" id="4.10.410.60:FF:000001">
    <property type="entry name" value="50S ribosomal protein L35"/>
    <property type="match status" value="1"/>
</dbReference>
<dbReference type="Gene3D" id="4.10.410.60">
    <property type="match status" value="1"/>
</dbReference>
<dbReference type="HAMAP" id="MF_00514">
    <property type="entry name" value="Ribosomal_bL35"/>
    <property type="match status" value="1"/>
</dbReference>
<dbReference type="InterPro" id="IPR001706">
    <property type="entry name" value="Ribosomal_bL35"/>
</dbReference>
<dbReference type="InterPro" id="IPR021137">
    <property type="entry name" value="Ribosomal_bL35-like"/>
</dbReference>
<dbReference type="InterPro" id="IPR018265">
    <property type="entry name" value="Ribosomal_bL35_CS"/>
</dbReference>
<dbReference type="InterPro" id="IPR037229">
    <property type="entry name" value="Ribosomal_bL35_sf"/>
</dbReference>
<dbReference type="NCBIfam" id="TIGR00001">
    <property type="entry name" value="rpmI_bact"/>
    <property type="match status" value="1"/>
</dbReference>
<dbReference type="PANTHER" id="PTHR33343">
    <property type="entry name" value="54S RIBOSOMAL PROTEIN BL35M"/>
    <property type="match status" value="1"/>
</dbReference>
<dbReference type="PANTHER" id="PTHR33343:SF1">
    <property type="entry name" value="LARGE RIBOSOMAL SUBUNIT PROTEIN BL35M"/>
    <property type="match status" value="1"/>
</dbReference>
<dbReference type="Pfam" id="PF01632">
    <property type="entry name" value="Ribosomal_L35p"/>
    <property type="match status" value="1"/>
</dbReference>
<dbReference type="PRINTS" id="PR00064">
    <property type="entry name" value="RIBOSOMALL35"/>
</dbReference>
<dbReference type="SUPFAM" id="SSF143034">
    <property type="entry name" value="L35p-like"/>
    <property type="match status" value="1"/>
</dbReference>
<dbReference type="PROSITE" id="PS00936">
    <property type="entry name" value="RIBOSOMAL_L35"/>
    <property type="match status" value="1"/>
</dbReference>
<name>RL35_CLOB1</name>